<reference key="1">
    <citation type="journal article" date="2004" name="Nat. Biotechnol.">
        <title>Complete genome sequence of the metabolically versatile photosynthetic bacterium Rhodopseudomonas palustris.</title>
        <authorList>
            <person name="Larimer F.W."/>
            <person name="Chain P."/>
            <person name="Hauser L."/>
            <person name="Lamerdin J.E."/>
            <person name="Malfatti S."/>
            <person name="Do L."/>
            <person name="Land M.L."/>
            <person name="Pelletier D.A."/>
            <person name="Beatty J.T."/>
            <person name="Lang A.S."/>
            <person name="Tabita F.R."/>
            <person name="Gibson J.L."/>
            <person name="Hanson T.E."/>
            <person name="Bobst C."/>
            <person name="Torres y Torres J.L."/>
            <person name="Peres C."/>
            <person name="Harrison F.H."/>
            <person name="Gibson J."/>
            <person name="Harwood C.S."/>
        </authorList>
    </citation>
    <scope>NUCLEOTIDE SEQUENCE [LARGE SCALE GENOMIC DNA]</scope>
    <source>
        <strain>ATCC BAA-98 / CGA009</strain>
    </source>
</reference>
<dbReference type="EMBL" id="BX572607">
    <property type="protein sequence ID" value="CAE29859.1"/>
    <property type="molecule type" value="Genomic_DNA"/>
</dbReference>
<dbReference type="RefSeq" id="WP_011159952.1">
    <property type="nucleotide sequence ID" value="NZ_CP116810.1"/>
</dbReference>
<dbReference type="SMR" id="Q6N1I7"/>
<dbReference type="STRING" id="258594.RPA4418"/>
<dbReference type="GeneID" id="66895553"/>
<dbReference type="eggNOG" id="COG3237">
    <property type="taxonomic scope" value="Bacteria"/>
</dbReference>
<dbReference type="HOGENOM" id="CLU_135567_3_2_5"/>
<dbReference type="PhylomeDB" id="Q6N1I7"/>
<dbReference type="Gene3D" id="1.10.1470.10">
    <property type="entry name" value="YjbJ"/>
    <property type="match status" value="1"/>
</dbReference>
<dbReference type="InterPro" id="IPR008462">
    <property type="entry name" value="CsbD"/>
</dbReference>
<dbReference type="InterPro" id="IPR036629">
    <property type="entry name" value="YjbJ_sf"/>
</dbReference>
<dbReference type="Pfam" id="PF05532">
    <property type="entry name" value="CsbD"/>
    <property type="match status" value="1"/>
</dbReference>
<dbReference type="SUPFAM" id="SSF69047">
    <property type="entry name" value="Hypothetical protein YjbJ"/>
    <property type="match status" value="1"/>
</dbReference>
<evidence type="ECO:0000256" key="1">
    <source>
        <dbReference type="SAM" id="MobiDB-lite"/>
    </source>
</evidence>
<evidence type="ECO:0000305" key="2"/>
<organism>
    <name type="scientific">Rhodopseudomonas palustris (strain ATCC BAA-98 / CGA009)</name>
    <dbReference type="NCBI Taxonomy" id="258594"/>
    <lineage>
        <taxon>Bacteria</taxon>
        <taxon>Pseudomonadati</taxon>
        <taxon>Pseudomonadota</taxon>
        <taxon>Alphaproteobacteria</taxon>
        <taxon>Hyphomicrobiales</taxon>
        <taxon>Nitrobacteraceae</taxon>
        <taxon>Rhodopseudomonas</taxon>
    </lineage>
</organism>
<gene>
    <name type="ordered locus">RPA4418</name>
</gene>
<feature type="chain" id="PRO_0000210028" description="UPF0337 protein RPA4418">
    <location>
        <begin position="1"/>
        <end position="71"/>
    </location>
</feature>
<feature type="region of interest" description="Disordered" evidence="1">
    <location>
        <begin position="1"/>
        <end position="54"/>
    </location>
</feature>
<protein>
    <recommendedName>
        <fullName>UPF0337 protein RPA4418</fullName>
    </recommendedName>
</protein>
<comment type="similarity">
    <text evidence="2">Belongs to the UPF0337 (CsbD) family.</text>
</comment>
<proteinExistence type="inferred from homology"/>
<accession>Q6N1I7</accession>
<sequence>MGSTMDKIKGQANELAGKAKQGIGEATGSDKLKGEGAIQEAKGHGQQALGNAKDAVKDTADKVAGAAHKNL</sequence>
<name>Y4418_RHOPA</name>